<sequence length="945" mass="104147">MYGAGGGRAKAERKGGVKEEAGPGGTGTGGNRVELLVFGYACKLFRDDERALAQEQGQHLIPWMGDHKILIDRYDGRGHLHDLSAYDAEYATWNRDYQLSEEEARVEALCDEERYLALHTDLLEEEARQEEEYKRLSEALAEDGNYSAVGFTYGSDYYDPSEPTEEEEPSKQREKSEAENLEENEEPFIAPLGLSVPSDVELPPTAKMHAIIERTANFVCKQGAQFEIMLKAKQARNSQFDFLRFDHYLNPYYKFIQKAMKEGRYTVLAESKSEEKKKSGPTSDNEEEDDEEDGSYLHPSLFASKKSSRLEELMKPLKVVDPDHPLAALVRKAQADSSAPAPPTADGTPAQPSQVEYTADSTVAAMYYSYYMLPDGTYCLAPPPPGIDVATYYSTLPAGVTVSSSPGVTTTVPPPPGTTPPPPPTTAESSSGVTSTTTTTSALAPVAIIPPPPDIQPVIDKLAEYVARNGLKFETSVRAKNDQRFEFLQPWHQYNAYYEFKKQFFLQKEGGGSTQAASTAEEAPTETAVEESSEAGEDGAPEGMAETGGRGSGKKEAGSSKSTVDGKLVKASFAPISFAIKAKENDLLPLEKNRVKLDDDSEEDEESRECQESTSSVANPSPAAAPPSAVVEEKKPQLTQEELEAKQAKQKLEDRLAAAAREKLAQASKESKEKQLQAERKRKAALFLQTLKNPLPDAEVGKLEESTFGVEETGVMPCPLLVGGRTLPMLEGKPPERPSSRCRDPPREEEREKKKKKHKKRSRTRSRSPKYHSSSKPRSRSHSKAKHSLPSAYRTVRRSRSRSRSPRRRAHSPERRREDRSVPTAYRMSGSPGVSRKRTRSRSPHEKKKKRRSRSRTKAKARSQSTSPSKQAAQRPSAHSAHSASISPVESRGSSQERSRGVSQEKDGQISSAIVSSVQSKITQDLMAKVRAMLAASKNLQTSAS</sequence>
<dbReference type="EMBL" id="CH473973">
    <property type="protein sequence ID" value="EDM13504.1"/>
    <property type="molecule type" value="Genomic_DNA"/>
</dbReference>
<dbReference type="EMBL" id="BC091384">
    <property type="protein sequence ID" value="AAH91384.1"/>
    <property type="molecule type" value="mRNA"/>
</dbReference>
<dbReference type="RefSeq" id="XP_006249333.1">
    <property type="nucleotide sequence ID" value="XM_006249271.5"/>
</dbReference>
<dbReference type="SMR" id="D3ZTQ1"/>
<dbReference type="FunCoup" id="D3ZTQ1">
    <property type="interactions" value="4446"/>
</dbReference>
<dbReference type="STRING" id="10116.ENSRNOP00000001235"/>
<dbReference type="GlyGen" id="D3ZTQ1">
    <property type="glycosylation" value="3 sites"/>
</dbReference>
<dbReference type="iPTMnet" id="D3ZTQ1"/>
<dbReference type="PhosphoSitePlus" id="D3ZTQ1"/>
<dbReference type="PaxDb" id="10116-ENSRNOP00000001235"/>
<dbReference type="PeptideAtlas" id="D3ZTQ1"/>
<dbReference type="Ensembl" id="ENSRNOT00000093237.2">
    <property type="protein sequence ID" value="ENSRNOP00000076174.2"/>
    <property type="gene ID" value="ENSRNOG00000000931.9"/>
</dbReference>
<dbReference type="GeneID" id="304431"/>
<dbReference type="AGR" id="RGD:1305004"/>
<dbReference type="CTD" id="6433"/>
<dbReference type="RGD" id="1305004">
    <property type="gene designation" value="Sfswap"/>
</dbReference>
<dbReference type="eggNOG" id="KOG1847">
    <property type="taxonomic scope" value="Eukaryota"/>
</dbReference>
<dbReference type="GeneTree" id="ENSGT00940000153892"/>
<dbReference type="InParanoid" id="D3ZTQ1"/>
<dbReference type="OrthoDB" id="5836667at2759"/>
<dbReference type="PhylomeDB" id="D3ZTQ1"/>
<dbReference type="TreeFam" id="TF106264"/>
<dbReference type="PRO" id="PR:D3ZTQ1"/>
<dbReference type="Proteomes" id="UP000002494">
    <property type="component" value="Chromosome 12"/>
</dbReference>
<dbReference type="Proteomes" id="UP000234681">
    <property type="component" value="Chromosome 12"/>
</dbReference>
<dbReference type="GO" id="GO:0005634">
    <property type="term" value="C:nucleus"/>
    <property type="evidence" value="ECO:0007669"/>
    <property type="project" value="UniProtKB-SubCell"/>
</dbReference>
<dbReference type="GO" id="GO:0003723">
    <property type="term" value="F:RNA binding"/>
    <property type="evidence" value="ECO:0007669"/>
    <property type="project" value="UniProtKB-KW"/>
</dbReference>
<dbReference type="GO" id="GO:0000380">
    <property type="term" value="P:alternative mRNA splicing, via spliceosome"/>
    <property type="evidence" value="ECO:0000266"/>
    <property type="project" value="RGD"/>
</dbReference>
<dbReference type="GO" id="GO:0000395">
    <property type="term" value="P:mRNA 5'-splice site recognition"/>
    <property type="evidence" value="ECO:0000266"/>
    <property type="project" value="RGD"/>
</dbReference>
<dbReference type="GO" id="GO:0048025">
    <property type="term" value="P:negative regulation of mRNA splicing, via spliceosome"/>
    <property type="evidence" value="ECO:0000314"/>
    <property type="project" value="UniProtKB"/>
</dbReference>
<dbReference type="FunFam" id="1.10.10.790:FF:000014">
    <property type="entry name" value="Splicing factor SWAP"/>
    <property type="match status" value="1"/>
</dbReference>
<dbReference type="FunFam" id="1.10.10.790:FF:000003">
    <property type="entry name" value="Splicing factor, suppressor of white-apricot homolog"/>
    <property type="match status" value="1"/>
</dbReference>
<dbReference type="Gene3D" id="1.10.10.790">
    <property type="entry name" value="Surp module"/>
    <property type="match status" value="2"/>
</dbReference>
<dbReference type="InterPro" id="IPR000061">
    <property type="entry name" value="Surp"/>
</dbReference>
<dbReference type="InterPro" id="IPR040397">
    <property type="entry name" value="SWAP"/>
</dbReference>
<dbReference type="InterPro" id="IPR035967">
    <property type="entry name" value="SWAP/Surp_sf"/>
</dbReference>
<dbReference type="InterPro" id="IPR019147">
    <property type="entry name" value="SWAP_N_domain"/>
</dbReference>
<dbReference type="PANTHER" id="PTHR13161">
    <property type="entry name" value="SPLICING FACTOR SUPPRESSOR OF WHITE APRICOT"/>
    <property type="match status" value="1"/>
</dbReference>
<dbReference type="PANTHER" id="PTHR13161:SF15">
    <property type="entry name" value="SPLICING FACTOR, SUPPRESSOR OF WHITE-APRICOT HOMOLOG"/>
    <property type="match status" value="1"/>
</dbReference>
<dbReference type="Pfam" id="PF09750">
    <property type="entry name" value="DRY_EERY"/>
    <property type="match status" value="1"/>
</dbReference>
<dbReference type="Pfam" id="PF01805">
    <property type="entry name" value="Surp"/>
    <property type="match status" value="2"/>
</dbReference>
<dbReference type="SMART" id="SM01141">
    <property type="entry name" value="DRY_EERY"/>
    <property type="match status" value="1"/>
</dbReference>
<dbReference type="SMART" id="SM00648">
    <property type="entry name" value="SWAP"/>
    <property type="match status" value="2"/>
</dbReference>
<dbReference type="SUPFAM" id="SSF109905">
    <property type="entry name" value="Surp module (SWAP domain)"/>
    <property type="match status" value="2"/>
</dbReference>
<dbReference type="PROSITE" id="PS50128">
    <property type="entry name" value="SURP"/>
    <property type="match status" value="2"/>
</dbReference>
<reference key="1">
    <citation type="submission" date="2005-07" db="EMBL/GenBank/DDBJ databases">
        <authorList>
            <person name="Mural R.J."/>
            <person name="Adams M.D."/>
            <person name="Myers E.W."/>
            <person name="Smith H.O."/>
            <person name="Venter J.C."/>
        </authorList>
    </citation>
    <scope>NUCLEOTIDE SEQUENCE [LARGE SCALE GENOMIC DNA]</scope>
    <source>
        <strain>Brown Norway</strain>
    </source>
</reference>
<reference key="2">
    <citation type="journal article" date="2004" name="Genome Res.">
        <title>The status, quality, and expansion of the NIH full-length cDNA project: the Mammalian Gene Collection (MGC).</title>
        <authorList>
            <consortium name="The MGC Project Team"/>
        </authorList>
    </citation>
    <scope>NUCLEOTIDE SEQUENCE [LARGE SCALE MRNA] OF 263-945</scope>
    <source>
        <tissue>Brain</tissue>
    </source>
</reference>
<reference key="3">
    <citation type="journal article" date="2004" name="J. Neurochem.">
        <title>Tau exon 10, whose missplicing causes frontotemporal dementia, is regulated by an intricate interplay of cis elements and trans factors.</title>
        <authorList>
            <person name="Wang J."/>
            <person name="Gao Q.S."/>
            <person name="Wang Y."/>
            <person name="Lafyatis R."/>
            <person name="Stamm S."/>
            <person name="Andreadis A."/>
        </authorList>
    </citation>
    <scope>FUNCTION</scope>
</reference>
<reference key="4">
    <citation type="journal article" date="2012" name="Nat. Commun.">
        <title>Quantitative maps of protein phosphorylation sites across 14 different rat organs and tissues.</title>
        <authorList>
            <person name="Lundby A."/>
            <person name="Secher A."/>
            <person name="Lage K."/>
            <person name="Nordsborg N.B."/>
            <person name="Dmytriyev A."/>
            <person name="Lundby C."/>
            <person name="Olsen J.V."/>
        </authorList>
    </citation>
    <scope>PHOSPHORYLATION [LARGE SCALE ANALYSIS] AT SER-283; SER-601 AND SER-903</scope>
    <scope>IDENTIFICATION BY MASS SPECTROMETRY [LARGE SCALE ANALYSIS]</scope>
</reference>
<gene>
    <name type="primary">Sfswap</name>
    <name type="synonym">Sfrs8</name>
    <name type="synonym">Srsf8</name>
    <name type="synonym">Swap</name>
</gene>
<accession>D3ZTQ1</accession>
<accession>Q5BJQ4</accession>
<keyword id="KW-0007">Acetylation</keyword>
<keyword id="KW-0175">Coiled coil</keyword>
<keyword id="KW-0507">mRNA processing</keyword>
<keyword id="KW-0508">mRNA splicing</keyword>
<keyword id="KW-0539">Nucleus</keyword>
<keyword id="KW-0597">Phosphoprotein</keyword>
<keyword id="KW-1185">Reference proteome</keyword>
<keyword id="KW-0677">Repeat</keyword>
<keyword id="KW-0678">Repressor</keyword>
<keyword id="KW-0694">RNA-binding</keyword>
<keyword id="KW-0804">Transcription</keyword>
<keyword id="KW-0805">Transcription regulation</keyword>
<feature type="chain" id="PRO_0000413024" description="Splicing factor, suppressor of white-apricot homolog">
    <location>
        <begin position="1"/>
        <end position="945"/>
    </location>
</feature>
<feature type="repeat" description="SURP motif 1">
    <location>
        <begin position="211"/>
        <end position="253"/>
    </location>
</feature>
<feature type="repeat" description="SURP motif 2">
    <location>
        <begin position="458"/>
        <end position="498"/>
    </location>
</feature>
<feature type="region of interest" description="Disordered" evidence="5">
    <location>
        <begin position="1"/>
        <end position="28"/>
    </location>
</feature>
<feature type="region of interest" description="Disordered" evidence="5">
    <location>
        <begin position="157"/>
        <end position="190"/>
    </location>
</feature>
<feature type="region of interest" description="Disordered" evidence="5">
    <location>
        <begin position="269"/>
        <end position="298"/>
    </location>
</feature>
<feature type="region of interest" description="Disordered" evidence="5">
    <location>
        <begin position="332"/>
        <end position="355"/>
    </location>
</feature>
<feature type="region of interest" description="Disordered" evidence="5">
    <location>
        <begin position="403"/>
        <end position="438"/>
    </location>
</feature>
<feature type="region of interest" description="Disordered" evidence="5">
    <location>
        <begin position="512"/>
        <end position="566"/>
    </location>
</feature>
<feature type="region of interest" description="Disordered" evidence="5">
    <location>
        <begin position="589"/>
        <end position="680"/>
    </location>
</feature>
<feature type="region of interest" description="Disordered" evidence="5">
    <location>
        <begin position="714"/>
        <end position="921"/>
    </location>
</feature>
<feature type="coiled-coil region" evidence="4">
    <location>
        <begin position="632"/>
        <end position="686"/>
    </location>
</feature>
<feature type="compositionally biased region" description="Basic and acidic residues" evidence="5">
    <location>
        <begin position="9"/>
        <end position="21"/>
    </location>
</feature>
<feature type="compositionally biased region" description="Basic and acidic residues" evidence="5">
    <location>
        <begin position="169"/>
        <end position="178"/>
    </location>
</feature>
<feature type="compositionally biased region" description="Acidic residues" evidence="5">
    <location>
        <begin position="284"/>
        <end position="294"/>
    </location>
</feature>
<feature type="compositionally biased region" description="Low complexity" evidence="5">
    <location>
        <begin position="335"/>
        <end position="352"/>
    </location>
</feature>
<feature type="compositionally biased region" description="Pro residues" evidence="5">
    <location>
        <begin position="412"/>
        <end position="425"/>
    </location>
</feature>
<feature type="compositionally biased region" description="Low complexity" evidence="5">
    <location>
        <begin position="426"/>
        <end position="438"/>
    </location>
</feature>
<feature type="compositionally biased region" description="Low complexity" evidence="5">
    <location>
        <begin position="514"/>
        <end position="527"/>
    </location>
</feature>
<feature type="compositionally biased region" description="Acidic residues" evidence="5">
    <location>
        <begin position="528"/>
        <end position="540"/>
    </location>
</feature>
<feature type="compositionally biased region" description="Basic and acidic residues" evidence="5">
    <location>
        <begin position="589"/>
        <end position="598"/>
    </location>
</feature>
<feature type="compositionally biased region" description="Low complexity" evidence="5">
    <location>
        <begin position="615"/>
        <end position="630"/>
    </location>
</feature>
<feature type="compositionally biased region" description="Basic and acidic residues" evidence="5">
    <location>
        <begin position="643"/>
        <end position="679"/>
    </location>
</feature>
<feature type="compositionally biased region" description="Basic and acidic residues" evidence="5">
    <location>
        <begin position="733"/>
        <end position="752"/>
    </location>
</feature>
<feature type="compositionally biased region" description="Basic residues" evidence="5">
    <location>
        <begin position="753"/>
        <end position="787"/>
    </location>
</feature>
<feature type="compositionally biased region" description="Basic residues" evidence="5">
    <location>
        <begin position="795"/>
        <end position="810"/>
    </location>
</feature>
<feature type="compositionally biased region" description="Basic and acidic residues" evidence="5">
    <location>
        <begin position="811"/>
        <end position="821"/>
    </location>
</feature>
<feature type="compositionally biased region" description="Basic residues" evidence="5">
    <location>
        <begin position="835"/>
        <end position="861"/>
    </location>
</feature>
<feature type="compositionally biased region" description="Low complexity" evidence="5">
    <location>
        <begin position="871"/>
        <end position="894"/>
    </location>
</feature>
<feature type="compositionally biased region" description="Basic and acidic residues" evidence="5">
    <location>
        <begin position="895"/>
        <end position="908"/>
    </location>
</feature>
<feature type="compositionally biased region" description="Low complexity" evidence="5">
    <location>
        <begin position="909"/>
        <end position="920"/>
    </location>
</feature>
<feature type="modified residue" description="Phosphoserine" evidence="8">
    <location>
        <position position="283"/>
    </location>
</feature>
<feature type="modified residue" description="N6-acetyllysine" evidence="2">
    <location>
        <position position="315"/>
    </location>
</feature>
<feature type="modified residue" description="Phosphoserine" evidence="8">
    <location>
        <position position="601"/>
    </location>
</feature>
<feature type="modified residue" description="Phosphoserine" evidence="3">
    <location>
        <position position="621"/>
    </location>
</feature>
<feature type="modified residue" description="Phosphothreonine" evidence="2">
    <location>
        <position position="639"/>
    </location>
</feature>
<feature type="modified residue" description="Phosphoserine" evidence="2">
    <location>
        <position position="829"/>
    </location>
</feature>
<feature type="modified residue" description="Phosphoserine" evidence="2">
    <location>
        <position position="831"/>
    </location>
</feature>
<feature type="modified residue" description="Phosphoserine" evidence="3">
    <location>
        <position position="899"/>
    </location>
</feature>
<feature type="modified residue" description="Phosphoserine" evidence="8">
    <location>
        <position position="903"/>
    </location>
</feature>
<feature type="sequence conflict" description="In Ref. 2; AAH91384." evidence="7" ref="2">
    <location>
        <begin position="543"/>
        <end position="570"/>
    </location>
</feature>
<evidence type="ECO:0000250" key="1"/>
<evidence type="ECO:0000250" key="2">
    <source>
        <dbReference type="UniProtKB" id="Q12872"/>
    </source>
</evidence>
<evidence type="ECO:0000250" key="3">
    <source>
        <dbReference type="UniProtKB" id="Q3USH5"/>
    </source>
</evidence>
<evidence type="ECO:0000255" key="4"/>
<evidence type="ECO:0000256" key="5">
    <source>
        <dbReference type="SAM" id="MobiDB-lite"/>
    </source>
</evidence>
<evidence type="ECO:0000269" key="6">
    <source>
    </source>
</evidence>
<evidence type="ECO:0000305" key="7"/>
<evidence type="ECO:0007744" key="8">
    <source>
    </source>
</evidence>
<organism>
    <name type="scientific">Rattus norvegicus</name>
    <name type="common">Rat</name>
    <dbReference type="NCBI Taxonomy" id="10116"/>
    <lineage>
        <taxon>Eukaryota</taxon>
        <taxon>Metazoa</taxon>
        <taxon>Chordata</taxon>
        <taxon>Craniata</taxon>
        <taxon>Vertebrata</taxon>
        <taxon>Euteleostomi</taxon>
        <taxon>Mammalia</taxon>
        <taxon>Eutheria</taxon>
        <taxon>Euarchontoglires</taxon>
        <taxon>Glires</taxon>
        <taxon>Rodentia</taxon>
        <taxon>Myomorpha</taxon>
        <taxon>Muroidea</taxon>
        <taxon>Muridae</taxon>
        <taxon>Murinae</taxon>
        <taxon>Rattus</taxon>
    </lineage>
</organism>
<protein>
    <recommendedName>
        <fullName>Splicing factor, suppressor of white-apricot homolog</fullName>
    </recommendedName>
    <alternativeName>
        <fullName>Splicing factor, arginine/serine-rich 8</fullName>
    </alternativeName>
    <alternativeName>
        <fullName>Suppressor of white apricot protein homolog</fullName>
    </alternativeName>
</protein>
<name>SFSWA_RAT</name>
<proteinExistence type="evidence at protein level"/>
<comment type="function">
    <text evidence="1 6">Plays a role as an alternative splicing regulator. Regulate its own expression at the level of RNA processing. Also regulates the splicing of fibronectin and CD45 genes. May act, at least in part, by interaction with other R/S-containing splicing factors (By similarity). Represses the splicing of MAPT/Tau exon 10.</text>
</comment>
<comment type="subcellular location">
    <subcellularLocation>
        <location evidence="7">Nucleus</location>
    </subcellularLocation>
</comment>